<proteinExistence type="inferred from homology"/>
<organism>
    <name type="scientific">Listeria monocytogenes serotype 4b (strain CLIP80459)</name>
    <dbReference type="NCBI Taxonomy" id="568819"/>
    <lineage>
        <taxon>Bacteria</taxon>
        <taxon>Bacillati</taxon>
        <taxon>Bacillota</taxon>
        <taxon>Bacilli</taxon>
        <taxon>Bacillales</taxon>
        <taxon>Listeriaceae</taxon>
        <taxon>Listeria</taxon>
    </lineage>
</organism>
<keyword id="KW-0378">Hydrolase</keyword>
<keyword id="KW-0408">Iron</keyword>
<keyword id="KW-0479">Metal-binding</keyword>
<keyword id="KW-0648">Protein biosynthesis</keyword>
<sequence length="183" mass="20671">MLTMDDIVREGHPALREVATEVTFPLSDEEKKLGREMLEFLINSQDEELAEKYGLRGGVGIAAPQLAVTKRFLAIHVHDEKDRLYSYVLYNPKIRSHSVQQACLSGGEGCLSVDREVPGYVVRSERVTIDAFDENGTPLKLRFKGYPAIVIQHEIDHLNGIMFYDHINKENPSYLPPDVDVFG</sequence>
<protein>
    <recommendedName>
        <fullName evidence="1">Peptide deformylase</fullName>
        <shortName evidence="1">PDF</shortName>
        <ecNumber evidence="1">3.5.1.88</ecNumber>
    </recommendedName>
    <alternativeName>
        <fullName evidence="1">Polypeptide deformylase</fullName>
    </alternativeName>
</protein>
<gene>
    <name evidence="1" type="primary">def</name>
    <name type="ordered locus">Lm4b_01071</name>
</gene>
<feature type="chain" id="PRO_1000203605" description="Peptide deformylase">
    <location>
        <begin position="1"/>
        <end position="183"/>
    </location>
</feature>
<feature type="active site" evidence="1">
    <location>
        <position position="154"/>
    </location>
</feature>
<feature type="binding site" evidence="1">
    <location>
        <position position="110"/>
    </location>
    <ligand>
        <name>Fe cation</name>
        <dbReference type="ChEBI" id="CHEBI:24875"/>
    </ligand>
</feature>
<feature type="binding site" evidence="1">
    <location>
        <position position="153"/>
    </location>
    <ligand>
        <name>Fe cation</name>
        <dbReference type="ChEBI" id="CHEBI:24875"/>
    </ligand>
</feature>
<feature type="binding site" evidence="1">
    <location>
        <position position="157"/>
    </location>
    <ligand>
        <name>Fe cation</name>
        <dbReference type="ChEBI" id="CHEBI:24875"/>
    </ligand>
</feature>
<comment type="function">
    <text evidence="1">Removes the formyl group from the N-terminal Met of newly synthesized proteins. Requires at least a dipeptide for an efficient rate of reaction. N-terminal L-methionine is a prerequisite for activity but the enzyme has broad specificity at other positions.</text>
</comment>
<comment type="catalytic activity">
    <reaction evidence="1">
        <text>N-terminal N-formyl-L-methionyl-[peptide] + H2O = N-terminal L-methionyl-[peptide] + formate</text>
        <dbReference type="Rhea" id="RHEA:24420"/>
        <dbReference type="Rhea" id="RHEA-COMP:10639"/>
        <dbReference type="Rhea" id="RHEA-COMP:10640"/>
        <dbReference type="ChEBI" id="CHEBI:15377"/>
        <dbReference type="ChEBI" id="CHEBI:15740"/>
        <dbReference type="ChEBI" id="CHEBI:49298"/>
        <dbReference type="ChEBI" id="CHEBI:64731"/>
        <dbReference type="EC" id="3.5.1.88"/>
    </reaction>
</comment>
<comment type="cofactor">
    <cofactor evidence="1">
        <name>Fe(2+)</name>
        <dbReference type="ChEBI" id="CHEBI:29033"/>
    </cofactor>
    <text evidence="1">Binds 1 Fe(2+) ion.</text>
</comment>
<comment type="similarity">
    <text evidence="1">Belongs to the polypeptide deformylase family.</text>
</comment>
<reference key="1">
    <citation type="journal article" date="2012" name="BMC Genomics">
        <title>Comparative genomics and transcriptomics of lineages I, II, and III strains of Listeria monocytogenes.</title>
        <authorList>
            <person name="Hain T."/>
            <person name="Ghai R."/>
            <person name="Billion A."/>
            <person name="Kuenne C.T."/>
            <person name="Steinweg C."/>
            <person name="Izar B."/>
            <person name="Mohamed W."/>
            <person name="Mraheil M."/>
            <person name="Domann E."/>
            <person name="Schaffrath S."/>
            <person name="Karst U."/>
            <person name="Goesmann A."/>
            <person name="Oehm S."/>
            <person name="Puhler A."/>
            <person name="Merkl R."/>
            <person name="Vorwerk S."/>
            <person name="Glaser P."/>
            <person name="Garrido P."/>
            <person name="Rusniok C."/>
            <person name="Buchrieser C."/>
            <person name="Goebel W."/>
            <person name="Chakraborty T."/>
        </authorList>
    </citation>
    <scope>NUCLEOTIDE SEQUENCE [LARGE SCALE GENOMIC DNA]</scope>
    <source>
        <strain>CLIP80459</strain>
    </source>
</reference>
<evidence type="ECO:0000255" key="1">
    <source>
        <dbReference type="HAMAP-Rule" id="MF_00163"/>
    </source>
</evidence>
<name>DEF_LISMC</name>
<accession>C1L1X2</accession>
<dbReference type="EC" id="3.5.1.88" evidence="1"/>
<dbReference type="EMBL" id="FM242711">
    <property type="protein sequence ID" value="CAS04837.1"/>
    <property type="molecule type" value="Genomic_DNA"/>
</dbReference>
<dbReference type="RefSeq" id="WP_003725563.1">
    <property type="nucleotide sequence ID" value="NC_012488.1"/>
</dbReference>
<dbReference type="SMR" id="C1L1X2"/>
<dbReference type="KEGG" id="lmc:Lm4b_01071"/>
<dbReference type="HOGENOM" id="CLU_061901_4_0_9"/>
<dbReference type="GO" id="GO:0046872">
    <property type="term" value="F:metal ion binding"/>
    <property type="evidence" value="ECO:0007669"/>
    <property type="project" value="UniProtKB-KW"/>
</dbReference>
<dbReference type="GO" id="GO:0042586">
    <property type="term" value="F:peptide deformylase activity"/>
    <property type="evidence" value="ECO:0007669"/>
    <property type="project" value="UniProtKB-UniRule"/>
</dbReference>
<dbReference type="GO" id="GO:0043686">
    <property type="term" value="P:co-translational protein modification"/>
    <property type="evidence" value="ECO:0007669"/>
    <property type="project" value="TreeGrafter"/>
</dbReference>
<dbReference type="GO" id="GO:0006412">
    <property type="term" value="P:translation"/>
    <property type="evidence" value="ECO:0007669"/>
    <property type="project" value="UniProtKB-UniRule"/>
</dbReference>
<dbReference type="CDD" id="cd00487">
    <property type="entry name" value="Pep_deformylase"/>
    <property type="match status" value="1"/>
</dbReference>
<dbReference type="FunFam" id="3.90.45.10:FF:000002">
    <property type="entry name" value="Peptide deformylase"/>
    <property type="match status" value="1"/>
</dbReference>
<dbReference type="Gene3D" id="3.90.45.10">
    <property type="entry name" value="Peptide deformylase"/>
    <property type="match status" value="1"/>
</dbReference>
<dbReference type="HAMAP" id="MF_00163">
    <property type="entry name" value="Pep_deformylase"/>
    <property type="match status" value="1"/>
</dbReference>
<dbReference type="InterPro" id="IPR023635">
    <property type="entry name" value="Peptide_deformylase"/>
</dbReference>
<dbReference type="InterPro" id="IPR036821">
    <property type="entry name" value="Peptide_deformylase_sf"/>
</dbReference>
<dbReference type="NCBIfam" id="TIGR00079">
    <property type="entry name" value="pept_deformyl"/>
    <property type="match status" value="1"/>
</dbReference>
<dbReference type="PANTHER" id="PTHR10458">
    <property type="entry name" value="PEPTIDE DEFORMYLASE"/>
    <property type="match status" value="1"/>
</dbReference>
<dbReference type="PANTHER" id="PTHR10458:SF8">
    <property type="entry name" value="PEPTIDE DEFORMYLASE 2"/>
    <property type="match status" value="1"/>
</dbReference>
<dbReference type="Pfam" id="PF01327">
    <property type="entry name" value="Pep_deformylase"/>
    <property type="match status" value="1"/>
</dbReference>
<dbReference type="PIRSF" id="PIRSF004749">
    <property type="entry name" value="Pep_def"/>
    <property type="match status" value="1"/>
</dbReference>
<dbReference type="PRINTS" id="PR01576">
    <property type="entry name" value="PDEFORMYLASE"/>
</dbReference>
<dbReference type="SUPFAM" id="SSF56420">
    <property type="entry name" value="Peptide deformylase"/>
    <property type="match status" value="1"/>
</dbReference>